<evidence type="ECO:0000255" key="1">
    <source>
        <dbReference type="HAMAP-Rule" id="MF_01440"/>
    </source>
</evidence>
<name>CHED_HAHCH</name>
<sequence>MNSAQKKPQPPPLSLPWFQSVNRFWVQNQGRFMAKIMPGEYYVTNQQELIGTVLGSCISACVRDPASGIGGMNHFMLPQNAGGGRMDILSDAFRYGNYAMEHLINDVMKLTGKRSTLEVKIFGGANVIRGMSSVGDKNIEFVRRYLEVDGFKIASEDVGGDYPRKILYDPTNGKVMMKRLKSLHNDTVIQREEHYMDELSHTKVAGDVDLF</sequence>
<comment type="function">
    <text evidence="1">Probably deamidates glutamine residues to glutamate on methyl-accepting chemotaxis receptors (MCPs), playing an important role in chemotaxis.</text>
</comment>
<comment type="catalytic activity">
    <reaction evidence="1">
        <text>L-glutaminyl-[protein] + H2O = L-glutamyl-[protein] + NH4(+)</text>
        <dbReference type="Rhea" id="RHEA:16441"/>
        <dbReference type="Rhea" id="RHEA-COMP:10207"/>
        <dbReference type="Rhea" id="RHEA-COMP:10208"/>
        <dbReference type="ChEBI" id="CHEBI:15377"/>
        <dbReference type="ChEBI" id="CHEBI:28938"/>
        <dbReference type="ChEBI" id="CHEBI:29973"/>
        <dbReference type="ChEBI" id="CHEBI:30011"/>
        <dbReference type="EC" id="3.5.1.44"/>
    </reaction>
</comment>
<comment type="similarity">
    <text evidence="1">Belongs to the CheD family.</text>
</comment>
<accession>Q2SPQ2</accession>
<feature type="chain" id="PRO_0000251038" description="Probable chemoreceptor glutamine deamidase CheD">
    <location>
        <begin position="1"/>
        <end position="211"/>
    </location>
</feature>
<keyword id="KW-0145">Chemotaxis</keyword>
<keyword id="KW-0378">Hydrolase</keyword>
<keyword id="KW-1185">Reference proteome</keyword>
<reference key="1">
    <citation type="journal article" date="2005" name="Nucleic Acids Res.">
        <title>Genomic blueprint of Hahella chejuensis, a marine microbe producing an algicidal agent.</title>
        <authorList>
            <person name="Jeong H."/>
            <person name="Yim J.H."/>
            <person name="Lee C."/>
            <person name="Choi S.-H."/>
            <person name="Park Y.K."/>
            <person name="Yoon S.H."/>
            <person name="Hur C.-G."/>
            <person name="Kang H.-Y."/>
            <person name="Kim D."/>
            <person name="Lee H.H."/>
            <person name="Park K.H."/>
            <person name="Park S.-H."/>
            <person name="Park H.-S."/>
            <person name="Lee H.K."/>
            <person name="Oh T.K."/>
            <person name="Kim J.F."/>
        </authorList>
    </citation>
    <scope>NUCLEOTIDE SEQUENCE [LARGE SCALE GENOMIC DNA]</scope>
    <source>
        <strain>KCTC 2396</strain>
    </source>
</reference>
<organism>
    <name type="scientific">Hahella chejuensis (strain KCTC 2396)</name>
    <dbReference type="NCBI Taxonomy" id="349521"/>
    <lineage>
        <taxon>Bacteria</taxon>
        <taxon>Pseudomonadati</taxon>
        <taxon>Pseudomonadota</taxon>
        <taxon>Gammaproteobacteria</taxon>
        <taxon>Oceanospirillales</taxon>
        <taxon>Hahellaceae</taxon>
        <taxon>Hahella</taxon>
    </lineage>
</organism>
<dbReference type="EC" id="3.5.1.44" evidence="1"/>
<dbReference type="EMBL" id="CP000155">
    <property type="protein sequence ID" value="ABC27372.1"/>
    <property type="molecule type" value="Genomic_DNA"/>
</dbReference>
<dbReference type="RefSeq" id="WP_011394449.1">
    <property type="nucleotide sequence ID" value="NC_007645.1"/>
</dbReference>
<dbReference type="SMR" id="Q2SPQ2"/>
<dbReference type="STRING" id="349521.HCH_00462"/>
<dbReference type="KEGG" id="hch:HCH_00462"/>
<dbReference type="eggNOG" id="COG1871">
    <property type="taxonomic scope" value="Bacteria"/>
</dbReference>
<dbReference type="HOGENOM" id="CLU_087854_0_0_6"/>
<dbReference type="OrthoDB" id="9807202at2"/>
<dbReference type="Proteomes" id="UP000000238">
    <property type="component" value="Chromosome"/>
</dbReference>
<dbReference type="GO" id="GO:0050568">
    <property type="term" value="F:protein-glutamine glutaminase activity"/>
    <property type="evidence" value="ECO:0007669"/>
    <property type="project" value="UniProtKB-UniRule"/>
</dbReference>
<dbReference type="GO" id="GO:0006935">
    <property type="term" value="P:chemotaxis"/>
    <property type="evidence" value="ECO:0007669"/>
    <property type="project" value="UniProtKB-UniRule"/>
</dbReference>
<dbReference type="CDD" id="cd16352">
    <property type="entry name" value="CheD"/>
    <property type="match status" value="1"/>
</dbReference>
<dbReference type="Gene3D" id="3.30.1330.200">
    <property type="match status" value="1"/>
</dbReference>
<dbReference type="HAMAP" id="MF_01440">
    <property type="entry name" value="CheD"/>
    <property type="match status" value="1"/>
</dbReference>
<dbReference type="InterPro" id="IPR038592">
    <property type="entry name" value="CheD-like_sf"/>
</dbReference>
<dbReference type="InterPro" id="IPR005659">
    <property type="entry name" value="Chemorcpt_Glu_NH3ase_CheD"/>
</dbReference>
<dbReference type="InterPro" id="IPR011324">
    <property type="entry name" value="Cytotoxic_necrot_fac-like_cat"/>
</dbReference>
<dbReference type="NCBIfam" id="NF010013">
    <property type="entry name" value="PRK13487.1"/>
    <property type="match status" value="1"/>
</dbReference>
<dbReference type="PANTHER" id="PTHR35147">
    <property type="entry name" value="CHEMORECEPTOR GLUTAMINE DEAMIDASE CHED-RELATED"/>
    <property type="match status" value="1"/>
</dbReference>
<dbReference type="PANTHER" id="PTHR35147:SF2">
    <property type="entry name" value="CHEMORECEPTOR GLUTAMINE DEAMIDASE CHED-RELATED"/>
    <property type="match status" value="1"/>
</dbReference>
<dbReference type="Pfam" id="PF03975">
    <property type="entry name" value="CheD"/>
    <property type="match status" value="1"/>
</dbReference>
<dbReference type="SUPFAM" id="SSF64438">
    <property type="entry name" value="CNF1/YfiH-like putative cysteine hydrolases"/>
    <property type="match status" value="1"/>
</dbReference>
<protein>
    <recommendedName>
        <fullName evidence="1">Probable chemoreceptor glutamine deamidase CheD</fullName>
        <ecNumber evidence="1">3.5.1.44</ecNumber>
    </recommendedName>
</protein>
<gene>
    <name evidence="1" type="primary">cheD</name>
    <name type="ordered locus">HCH_00462</name>
</gene>
<proteinExistence type="inferred from homology"/>